<protein>
    <recommendedName>
        <fullName evidence="1">Probable GTP-binding protein EngB</fullName>
    </recommendedName>
</protein>
<accession>A9NFM5</accession>
<keyword id="KW-0131">Cell cycle</keyword>
<keyword id="KW-0132">Cell division</keyword>
<keyword id="KW-0342">GTP-binding</keyword>
<keyword id="KW-0460">Magnesium</keyword>
<keyword id="KW-0479">Metal-binding</keyword>
<keyword id="KW-0547">Nucleotide-binding</keyword>
<keyword id="KW-1185">Reference proteome</keyword>
<keyword id="KW-0717">Septation</keyword>
<comment type="function">
    <text evidence="1">Necessary for normal cell division and for the maintenance of normal septation.</text>
</comment>
<comment type="cofactor">
    <cofactor evidence="1">
        <name>Mg(2+)</name>
        <dbReference type="ChEBI" id="CHEBI:18420"/>
    </cofactor>
</comment>
<comment type="similarity">
    <text evidence="1">Belongs to the TRAFAC class TrmE-Era-EngA-EngB-Septin-like GTPase superfamily. EngB GTPase family.</text>
</comment>
<feature type="chain" id="PRO_1000115949" description="Probable GTP-binding protein EngB">
    <location>
        <begin position="1"/>
        <end position="191"/>
    </location>
</feature>
<feature type="domain" description="EngB-type G" evidence="1">
    <location>
        <begin position="22"/>
        <end position="191"/>
    </location>
</feature>
<feature type="binding site" evidence="1">
    <location>
        <begin position="30"/>
        <end position="37"/>
    </location>
    <ligand>
        <name>GTP</name>
        <dbReference type="ChEBI" id="CHEBI:37565"/>
    </ligand>
</feature>
<feature type="binding site" evidence="1">
    <location>
        <position position="37"/>
    </location>
    <ligand>
        <name>Mg(2+)</name>
        <dbReference type="ChEBI" id="CHEBI:18420"/>
    </ligand>
</feature>
<feature type="binding site" evidence="1">
    <location>
        <begin position="57"/>
        <end position="61"/>
    </location>
    <ligand>
        <name>GTP</name>
        <dbReference type="ChEBI" id="CHEBI:37565"/>
    </ligand>
</feature>
<feature type="binding site" evidence="1">
    <location>
        <position position="59"/>
    </location>
    <ligand>
        <name>Mg(2+)</name>
        <dbReference type="ChEBI" id="CHEBI:18420"/>
    </ligand>
</feature>
<feature type="binding site" evidence="1">
    <location>
        <begin position="75"/>
        <end position="78"/>
    </location>
    <ligand>
        <name>GTP</name>
        <dbReference type="ChEBI" id="CHEBI:37565"/>
    </ligand>
</feature>
<feature type="binding site" evidence="1">
    <location>
        <begin position="142"/>
        <end position="145"/>
    </location>
    <ligand>
        <name>GTP</name>
        <dbReference type="ChEBI" id="CHEBI:37565"/>
    </ligand>
</feature>
<feature type="binding site" evidence="1">
    <location>
        <begin position="172"/>
        <end position="174"/>
    </location>
    <ligand>
        <name>GTP</name>
        <dbReference type="ChEBI" id="CHEBI:37565"/>
    </ligand>
</feature>
<evidence type="ECO:0000255" key="1">
    <source>
        <dbReference type="HAMAP-Rule" id="MF_00321"/>
    </source>
</evidence>
<organism>
    <name type="scientific">Acholeplasma laidlawii (strain PG-8A)</name>
    <dbReference type="NCBI Taxonomy" id="441768"/>
    <lineage>
        <taxon>Bacteria</taxon>
        <taxon>Bacillati</taxon>
        <taxon>Mycoplasmatota</taxon>
        <taxon>Mollicutes</taxon>
        <taxon>Acholeplasmatales</taxon>
        <taxon>Acholeplasmataceae</taxon>
        <taxon>Acholeplasma</taxon>
    </lineage>
</organism>
<sequence>MMIKQAEFITSAVSITDLPKDDFDHFLILGRSNVGKSSLINAITNRKKLARVSQTPGKTITLNLYLLNQSLYLVDAPGYGYAKRSKTQTLTFMRMINEYIQLNGHLKKIILLVDFNIGPTQDDLDMYIELQAFDVDIIVVTTKYDKVKSSHRLKQEKVIRSKFFEGQKIYFTSSETKFGIDKLINEEFSNE</sequence>
<dbReference type="EMBL" id="CP000896">
    <property type="protein sequence ID" value="ABX81155.1"/>
    <property type="molecule type" value="Genomic_DNA"/>
</dbReference>
<dbReference type="SMR" id="A9NFM5"/>
<dbReference type="STRING" id="441768.ACL_0537"/>
<dbReference type="KEGG" id="acl:ACL_0537"/>
<dbReference type="eggNOG" id="COG0218">
    <property type="taxonomic scope" value="Bacteria"/>
</dbReference>
<dbReference type="HOGENOM" id="CLU_033732_3_2_14"/>
<dbReference type="OrthoDB" id="9804921at2"/>
<dbReference type="Proteomes" id="UP000008558">
    <property type="component" value="Chromosome"/>
</dbReference>
<dbReference type="GO" id="GO:0005829">
    <property type="term" value="C:cytosol"/>
    <property type="evidence" value="ECO:0007669"/>
    <property type="project" value="TreeGrafter"/>
</dbReference>
<dbReference type="GO" id="GO:0005525">
    <property type="term" value="F:GTP binding"/>
    <property type="evidence" value="ECO:0007669"/>
    <property type="project" value="UniProtKB-UniRule"/>
</dbReference>
<dbReference type="GO" id="GO:0046872">
    <property type="term" value="F:metal ion binding"/>
    <property type="evidence" value="ECO:0007669"/>
    <property type="project" value="UniProtKB-KW"/>
</dbReference>
<dbReference type="GO" id="GO:0000917">
    <property type="term" value="P:division septum assembly"/>
    <property type="evidence" value="ECO:0007669"/>
    <property type="project" value="UniProtKB-KW"/>
</dbReference>
<dbReference type="CDD" id="cd01876">
    <property type="entry name" value="YihA_EngB"/>
    <property type="match status" value="1"/>
</dbReference>
<dbReference type="Gene3D" id="3.40.50.300">
    <property type="entry name" value="P-loop containing nucleotide triphosphate hydrolases"/>
    <property type="match status" value="1"/>
</dbReference>
<dbReference type="HAMAP" id="MF_00321">
    <property type="entry name" value="GTPase_EngB"/>
    <property type="match status" value="1"/>
</dbReference>
<dbReference type="InterPro" id="IPR030393">
    <property type="entry name" value="G_ENGB_dom"/>
</dbReference>
<dbReference type="InterPro" id="IPR006073">
    <property type="entry name" value="GTP-bd"/>
</dbReference>
<dbReference type="InterPro" id="IPR019987">
    <property type="entry name" value="GTP-bd_ribosome_bio_YsxC"/>
</dbReference>
<dbReference type="InterPro" id="IPR027417">
    <property type="entry name" value="P-loop_NTPase"/>
</dbReference>
<dbReference type="NCBIfam" id="TIGR03598">
    <property type="entry name" value="GTPase_YsxC"/>
    <property type="match status" value="1"/>
</dbReference>
<dbReference type="PANTHER" id="PTHR11649:SF13">
    <property type="entry name" value="ENGB-TYPE G DOMAIN-CONTAINING PROTEIN"/>
    <property type="match status" value="1"/>
</dbReference>
<dbReference type="PANTHER" id="PTHR11649">
    <property type="entry name" value="MSS1/TRME-RELATED GTP-BINDING PROTEIN"/>
    <property type="match status" value="1"/>
</dbReference>
<dbReference type="Pfam" id="PF01926">
    <property type="entry name" value="MMR_HSR1"/>
    <property type="match status" value="1"/>
</dbReference>
<dbReference type="SUPFAM" id="SSF52540">
    <property type="entry name" value="P-loop containing nucleoside triphosphate hydrolases"/>
    <property type="match status" value="1"/>
</dbReference>
<dbReference type="PROSITE" id="PS51706">
    <property type="entry name" value="G_ENGB"/>
    <property type="match status" value="1"/>
</dbReference>
<proteinExistence type="inferred from homology"/>
<name>ENGB_ACHLI</name>
<gene>
    <name evidence="1" type="primary">engB</name>
    <name type="ordered locus">ACL_0537</name>
</gene>
<reference key="1">
    <citation type="journal article" date="2011" name="J. Bacteriol.">
        <title>Complete genome and proteome of Acholeplasma laidlawii.</title>
        <authorList>
            <person name="Lazarev V.N."/>
            <person name="Levitskii S.A."/>
            <person name="Basovskii Y.I."/>
            <person name="Chukin M.M."/>
            <person name="Akopian T.A."/>
            <person name="Vereshchagin V.V."/>
            <person name="Kostrjukova E.S."/>
            <person name="Kovaleva G.Y."/>
            <person name="Kazanov M.D."/>
            <person name="Malko D.B."/>
            <person name="Vitreschak A.G."/>
            <person name="Sernova N.V."/>
            <person name="Gelfand M.S."/>
            <person name="Demina I.A."/>
            <person name="Serebryakova M.V."/>
            <person name="Galyamina M.A."/>
            <person name="Vtyurin N.N."/>
            <person name="Rogov S.I."/>
            <person name="Alexeev D.G."/>
            <person name="Ladygina V.G."/>
            <person name="Govorun V.M."/>
        </authorList>
    </citation>
    <scope>NUCLEOTIDE SEQUENCE [LARGE SCALE GENOMIC DNA]</scope>
    <source>
        <strain>PG-8A</strain>
    </source>
</reference>